<reference key="1">
    <citation type="journal article" date="2001" name="Mol. Cell">
        <title>Human Mus81-associated endonuclease cleaves Holliday junctions in vitro.</title>
        <authorList>
            <person name="Chen X.-B."/>
            <person name="Melchionna R."/>
            <person name="Denis C.-M."/>
            <person name="Gaillard P.-H.L."/>
            <person name="Blasina A."/>
            <person name="Van de Weyer I."/>
            <person name="Boddy M.N."/>
            <person name="Russell P."/>
            <person name="Vialard J."/>
            <person name="McGowan C.H."/>
        </authorList>
    </citation>
    <scope>NUCLEOTIDE SEQUENCE [MRNA]</scope>
    <source>
        <strain>BALB/cJ</strain>
    </source>
</reference>
<reference key="2">
    <citation type="journal article" date="2004" name="Genome Res.">
        <title>The status, quality, and expansion of the NIH full-length cDNA project: the Mammalian Gene Collection (MGC).</title>
        <authorList>
            <consortium name="The MGC Project Team"/>
        </authorList>
    </citation>
    <scope>NUCLEOTIDE SEQUENCE [LARGE SCALE MRNA]</scope>
    <source>
        <tissue>Mammary tumor</tissue>
    </source>
</reference>
<reference key="3">
    <citation type="journal article" date="2003" name="EMBO J.">
        <title>Eme1 is involved in DNA damage processing and maintenance of genomic stability in mammalian cells.</title>
        <authorList>
            <person name="Abraham J."/>
            <person name="Lemmers B."/>
            <person name="Hande M.P."/>
            <person name="Moynahan M.E."/>
            <person name="Chahwan C."/>
            <person name="Ciccia A."/>
            <person name="Essers J."/>
            <person name="Hanada K."/>
            <person name="Chahwan R."/>
            <person name="Khaw A.K."/>
            <person name="McPherson P."/>
            <person name="Shehabeldin A."/>
            <person name="Laister R."/>
            <person name="Arrowsmith C."/>
            <person name="Kanaar R."/>
            <person name="West S.C."/>
            <person name="Jasin M."/>
            <person name="Hakem R."/>
        </authorList>
    </citation>
    <scope>FUNCTION</scope>
    <scope>INTERACTION WITH EME1</scope>
</reference>
<reference key="4">
    <citation type="journal article" date="2004" name="Science">
        <title>Involvement of mammalian Mus81 in genome integrity and tumor suppression.</title>
        <authorList>
            <person name="McPherson J.P."/>
            <person name="Lemmers B."/>
            <person name="Chahwan R."/>
            <person name="Pamidi A."/>
            <person name="Migon E."/>
            <person name="Matysiak-Zablocki E."/>
            <person name="Moynahan M.E."/>
            <person name="Essers J."/>
            <person name="Hanada K."/>
            <person name="Poonepalli A."/>
            <person name="Sanchez-Sweatman O."/>
            <person name="Khokha R."/>
            <person name="Kanaar R."/>
            <person name="Jasin M."/>
            <person name="Hande M.P."/>
            <person name="Hakem R."/>
        </authorList>
    </citation>
    <scope>FUNCTION</scope>
</reference>
<reference key="5">
    <citation type="journal article" date="2005" name="Mol. Cell. Biol.">
        <title>Disruption of murine Mus81 increases genomic instability and DNA damage sensitivity but does not promote tumorigenesis.</title>
        <authorList>
            <person name="Dendouga N."/>
            <person name="Gao H."/>
            <person name="Moechars D."/>
            <person name="Janicot M."/>
            <person name="Vialard J."/>
            <person name="McGowan C.H."/>
        </authorList>
    </citation>
    <scope>FUNCTION</scope>
</reference>
<reference key="6">
    <citation type="journal article" date="2016" name="PLoS ONE">
        <title>The GIY-YIG type endonuclease ankyrin repeat and LEM domain-containing protein 1 (ANKLE1) is dispensable for mouse hematopoiesis.</title>
        <authorList>
            <person name="Braun J."/>
            <person name="Meixner A."/>
            <person name="Brachner A."/>
            <person name="Foisner R."/>
        </authorList>
    </citation>
    <scope>TISSUE SPECIFICITY</scope>
</reference>
<name>MUS81_MOUSE</name>
<feature type="chain" id="PRO_0000198859" description="Structure-specific endonuclease subunit MUS81">
    <location>
        <begin position="1"/>
        <end position="551"/>
    </location>
</feature>
<feature type="domain" description="ERCC4" evidence="2">
    <location>
        <begin position="270"/>
        <end position="372"/>
    </location>
</feature>
<feature type="region of interest" description="Disordered" evidence="3">
    <location>
        <begin position="84"/>
        <end position="131"/>
    </location>
</feature>
<feature type="region of interest" description="Interaction with BLM" evidence="1">
    <location>
        <begin position="124"/>
        <end position="244"/>
    </location>
</feature>
<feature type="region of interest" description="Winged helix domain (WHD); critical for endonuclease activity" evidence="1">
    <location>
        <begin position="131"/>
        <end position="230"/>
    </location>
</feature>
<feature type="region of interest" description="Disordered" evidence="3">
    <location>
        <begin position="229"/>
        <end position="259"/>
    </location>
</feature>
<feature type="region of interest" description="Helix-hairpin-helix (2HhH); involved in DNA recognition and bending" evidence="1">
    <location>
        <begin position="471"/>
        <end position="545"/>
    </location>
</feature>
<feature type="compositionally biased region" description="Low complexity" evidence="3">
    <location>
        <begin position="92"/>
        <end position="107"/>
    </location>
</feature>
<feature type="compositionally biased region" description="Polar residues" evidence="3">
    <location>
        <begin position="110"/>
        <end position="131"/>
    </location>
</feature>
<feature type="compositionally biased region" description="Basic and acidic residues" evidence="3">
    <location>
        <begin position="229"/>
        <end position="238"/>
    </location>
</feature>
<feature type="active site" evidence="1">
    <location>
        <position position="274"/>
    </location>
</feature>
<feature type="active site" evidence="1">
    <location>
        <position position="277"/>
    </location>
</feature>
<feature type="active site" evidence="1">
    <location>
        <position position="307"/>
    </location>
</feature>
<feature type="binding site" evidence="1">
    <location>
        <position position="274"/>
    </location>
    <ligand>
        <name>Mg(2+)</name>
        <dbReference type="ChEBI" id="CHEBI:18420"/>
        <label>1</label>
    </ligand>
</feature>
<feature type="binding site" evidence="1">
    <location>
        <position position="277"/>
    </location>
    <ligand>
        <name>Mg(2+)</name>
        <dbReference type="ChEBI" id="CHEBI:18420"/>
        <label>1</label>
    </ligand>
</feature>
<feature type="binding site" evidence="1">
    <location>
        <position position="277"/>
    </location>
    <ligand>
        <name>Mg(2+)</name>
        <dbReference type="ChEBI" id="CHEBI:18420"/>
        <label>2</label>
    </ligand>
</feature>
<feature type="binding site" evidence="1">
    <location>
        <position position="307"/>
    </location>
    <ligand>
        <name>Mg(2+)</name>
        <dbReference type="ChEBI" id="CHEBI:18420"/>
        <label>1</label>
    </ligand>
</feature>
<feature type="binding site" evidence="1">
    <location>
        <position position="307"/>
    </location>
    <ligand>
        <name>Mg(2+)</name>
        <dbReference type="ChEBI" id="CHEBI:18420"/>
        <label>2</label>
    </ligand>
</feature>
<feature type="binding site" evidence="1">
    <location>
        <position position="333"/>
    </location>
    <ligand>
        <name>Mg(2+)</name>
        <dbReference type="ChEBI" id="CHEBI:18420"/>
        <label>1</label>
    </ligand>
</feature>
<feature type="binding site" evidence="1">
    <location>
        <position position="333"/>
    </location>
    <ligand>
        <name>Mg(2+)</name>
        <dbReference type="ChEBI" id="CHEBI:18420"/>
        <label>2</label>
    </ligand>
</feature>
<feature type="binding site" evidence="1">
    <location>
        <position position="334"/>
    </location>
    <ligand>
        <name>Mg(2+)</name>
        <dbReference type="ChEBI" id="CHEBI:18420"/>
        <label>2</label>
    </ligand>
</feature>
<feature type="modified residue" description="Phosphoserine" evidence="1">
    <location>
        <position position="95"/>
    </location>
</feature>
<feature type="sequence conflict" description="In Ref. 2; AAH26560." evidence="8" ref="2">
    <original>P</original>
    <variation>R</variation>
    <location>
        <position position="4"/>
    </location>
</feature>
<feature type="sequence conflict" description="In Ref. 2; AAH26560." evidence="8" ref="2">
    <original>A</original>
    <variation>D</variation>
    <location>
        <position position="227"/>
    </location>
</feature>
<feature type="sequence conflict" description="In Ref. 1; AAL28066." evidence="8" ref="1">
    <original>P</original>
    <variation>L</variation>
    <location>
        <position position="285"/>
    </location>
</feature>
<feature type="sequence conflict" description="In Ref. 1; AAL28066." evidence="8" ref="1">
    <original>A</original>
    <variation>V</variation>
    <location>
        <position position="409"/>
    </location>
</feature>
<feature type="sequence conflict" description="In Ref. 2; AAH26560." evidence="8" ref="2">
    <original>A</original>
    <variation>T</variation>
    <location>
        <position position="513"/>
    </location>
</feature>
<feature type="helix" evidence="11">
    <location>
        <begin position="20"/>
        <end position="35"/>
    </location>
</feature>
<feature type="helix" evidence="11">
    <location>
        <begin position="40"/>
        <end position="52"/>
    </location>
</feature>
<feature type="helix" evidence="11">
    <location>
        <begin position="60"/>
        <end position="64"/>
    </location>
</feature>
<feature type="turn" evidence="11">
    <location>
        <begin position="67"/>
        <end position="69"/>
    </location>
</feature>
<feature type="helix" evidence="11">
    <location>
        <begin position="71"/>
        <end position="87"/>
    </location>
</feature>
<gene>
    <name evidence="10" type="primary">Mus81</name>
</gene>
<sequence length="551" mass="61531">MAEPVRLGRKRPLPVCPNPLFVRWLTEWRDEAASRGRHTRFVFQKALRSLQRYPLPLRSGKEAKILQHFGDRLCRMLDEKLKQHLASGGDHAPSSPSGKKGASKGPPEQVQDSSMPVPTQPQAGSTSVGYWPAQNSGAREILLQLYREHLNSDGHSFLTKEELLQKCAQKTPRVVPGSSKPWPALRSLLHRNLILGTHRPARYALTPEGLELAQKLAEAEGLSTRHAGFRPEEHHGEDSAVPEALSEPGTTEGAVQQRPLELRPSEYRVLLCVDIGETRGAGHRPEMLRELQRLRVPHTVRKLHVGDFVWVAQETRPRDPERPGELVLDHIVERKRLDDLCSSIIDGRFREQKFRLKRCGLGHRVYLVEEHGSVHNLSLPESTLLQAVTNTQVIDGFFVKRTMDIKESAGYLALLTKGLERLYQGHTLRSRPWGAPGAAESEAKPSTNPLCSLLTFSDFNAEAVKNKAQSVREVFARQLMQVRGLSGEKAAAVVDRYSTPASLLAAYDACATAKEQEMLLSTIKCGRLQRNLGPALSRTLYQLYCSHSPLS</sequence>
<accession>Q91ZJ0</accession>
<accession>Q8R356</accession>
<dbReference type="EC" id="3.1.22.-" evidence="1"/>
<dbReference type="EMBL" id="AF425647">
    <property type="protein sequence ID" value="AAL28066.1"/>
    <property type="molecule type" value="mRNA"/>
</dbReference>
<dbReference type="EMBL" id="BC026560">
    <property type="protein sequence ID" value="AAH26560.1"/>
    <property type="molecule type" value="mRNA"/>
</dbReference>
<dbReference type="CCDS" id="CCDS29467.1"/>
<dbReference type="RefSeq" id="NP_082153.3">
    <property type="nucleotide sequence ID" value="NM_027877.3"/>
</dbReference>
<dbReference type="PDB" id="2KP7">
    <property type="method" value="NMR"/>
    <property type="chains" value="A=11-90"/>
</dbReference>
<dbReference type="PDBsum" id="2KP7"/>
<dbReference type="BMRB" id="Q91ZJ0"/>
<dbReference type="SMR" id="Q91ZJ0"/>
<dbReference type="BioGRID" id="214873">
    <property type="interactions" value="18"/>
</dbReference>
<dbReference type="ComplexPortal" id="CPX-585">
    <property type="entry name" value="MUS81-EME1 structure-specific endonuclease complex"/>
</dbReference>
<dbReference type="ComplexPortal" id="CPX-587">
    <property type="entry name" value="MUS81-EME2 structure-specific endonuclease complex"/>
</dbReference>
<dbReference type="FunCoup" id="Q91ZJ0">
    <property type="interactions" value="1038"/>
</dbReference>
<dbReference type="IntAct" id="Q91ZJ0">
    <property type="interactions" value="15"/>
</dbReference>
<dbReference type="STRING" id="10090.ENSMUSP00000114895"/>
<dbReference type="PhosphoSitePlus" id="Q91ZJ0"/>
<dbReference type="PaxDb" id="10090-ENSMUSP00000114895"/>
<dbReference type="PeptideAtlas" id="Q91ZJ0"/>
<dbReference type="ProteomicsDB" id="287332"/>
<dbReference type="Pumba" id="Q91ZJ0"/>
<dbReference type="Antibodypedia" id="16020">
    <property type="antibodies" value="187 antibodies from 26 providers"/>
</dbReference>
<dbReference type="Ensembl" id="ENSMUST00000124334.8">
    <property type="protein sequence ID" value="ENSMUSP00000114895.2"/>
    <property type="gene ID" value="ENSMUSG00000024906.11"/>
</dbReference>
<dbReference type="GeneID" id="71711"/>
<dbReference type="KEGG" id="mmu:71711"/>
<dbReference type="UCSC" id="uc008gdn.2">
    <property type="organism name" value="mouse"/>
</dbReference>
<dbReference type="AGR" id="MGI:1918961"/>
<dbReference type="CTD" id="80198"/>
<dbReference type="MGI" id="MGI:1918961">
    <property type="gene designation" value="Mus81"/>
</dbReference>
<dbReference type="VEuPathDB" id="HostDB:ENSMUSG00000024906"/>
<dbReference type="eggNOG" id="KOG2379">
    <property type="taxonomic scope" value="Eukaryota"/>
</dbReference>
<dbReference type="GeneTree" id="ENSGT00390000005498"/>
<dbReference type="HOGENOM" id="CLU_014329_3_0_1"/>
<dbReference type="InParanoid" id="Q91ZJ0"/>
<dbReference type="OMA" id="ELGDAMW"/>
<dbReference type="OrthoDB" id="5963188at2759"/>
<dbReference type="PhylomeDB" id="Q91ZJ0"/>
<dbReference type="TreeFam" id="TF315113"/>
<dbReference type="Reactome" id="R-MMU-5693568">
    <property type="pathway name" value="Resolution of D-loop Structures through Holliday Junction Intermediates"/>
</dbReference>
<dbReference type="Reactome" id="R-MMU-6783310">
    <property type="pathway name" value="Fanconi Anemia Pathway"/>
</dbReference>
<dbReference type="BioGRID-ORCS" id="71711">
    <property type="hits" value="25 hits in 112 CRISPR screens"/>
</dbReference>
<dbReference type="ChiTaRS" id="Mus81">
    <property type="organism name" value="mouse"/>
</dbReference>
<dbReference type="EvolutionaryTrace" id="Q91ZJ0"/>
<dbReference type="PRO" id="PR:Q91ZJ0"/>
<dbReference type="Proteomes" id="UP000000589">
    <property type="component" value="Chromosome 19"/>
</dbReference>
<dbReference type="RNAct" id="Q91ZJ0">
    <property type="molecule type" value="protein"/>
</dbReference>
<dbReference type="Bgee" id="ENSMUSG00000024906">
    <property type="expression patterns" value="Expressed in hindlimb stylopod muscle and 206 other cell types or tissues"/>
</dbReference>
<dbReference type="ExpressionAtlas" id="Q91ZJ0">
    <property type="expression patterns" value="baseline and differential"/>
</dbReference>
<dbReference type="GO" id="GO:1905347">
    <property type="term" value="C:endodeoxyribonuclease complex"/>
    <property type="evidence" value="ECO:0000266"/>
    <property type="project" value="ComplexPortal"/>
</dbReference>
<dbReference type="GO" id="GO:0043596">
    <property type="term" value="C:nuclear replication fork"/>
    <property type="evidence" value="ECO:0000303"/>
    <property type="project" value="ComplexPortal"/>
</dbReference>
<dbReference type="GO" id="GO:0005730">
    <property type="term" value="C:nucleolus"/>
    <property type="evidence" value="ECO:0007669"/>
    <property type="project" value="UniProtKB-SubCell"/>
</dbReference>
<dbReference type="GO" id="GO:0005634">
    <property type="term" value="C:nucleus"/>
    <property type="evidence" value="ECO:0000266"/>
    <property type="project" value="MGI"/>
</dbReference>
<dbReference type="GO" id="GO:0048257">
    <property type="term" value="F:3'-flap endonuclease activity"/>
    <property type="evidence" value="ECO:0007669"/>
    <property type="project" value="Ensembl"/>
</dbReference>
<dbReference type="GO" id="GO:0008821">
    <property type="term" value="F:crossover junction DNA endonuclease activity"/>
    <property type="evidence" value="ECO:0007669"/>
    <property type="project" value="InterPro"/>
</dbReference>
<dbReference type="GO" id="GO:0003677">
    <property type="term" value="F:DNA binding"/>
    <property type="evidence" value="ECO:0007669"/>
    <property type="project" value="InterPro"/>
</dbReference>
<dbReference type="GO" id="GO:1990238">
    <property type="term" value="F:double-stranded DNA endonuclease activity"/>
    <property type="evidence" value="ECO:0007669"/>
    <property type="project" value="Ensembl"/>
</dbReference>
<dbReference type="GO" id="GO:0046872">
    <property type="term" value="F:metal ion binding"/>
    <property type="evidence" value="ECO:0007669"/>
    <property type="project" value="UniProtKB-KW"/>
</dbReference>
<dbReference type="GO" id="GO:0006308">
    <property type="term" value="P:DNA catabolic process"/>
    <property type="evidence" value="ECO:0000266"/>
    <property type="project" value="MGI"/>
</dbReference>
<dbReference type="GO" id="GO:0006310">
    <property type="term" value="P:DNA recombination"/>
    <property type="evidence" value="ECO:0007669"/>
    <property type="project" value="UniProtKB-KW"/>
</dbReference>
<dbReference type="GO" id="GO:0006281">
    <property type="term" value="P:DNA repair"/>
    <property type="evidence" value="ECO:0000266"/>
    <property type="project" value="MGI"/>
</dbReference>
<dbReference type="GO" id="GO:0006302">
    <property type="term" value="P:double-strand break repair"/>
    <property type="evidence" value="ECO:0000266"/>
    <property type="project" value="ComplexPortal"/>
</dbReference>
<dbReference type="GO" id="GO:0033687">
    <property type="term" value="P:osteoblast proliferation"/>
    <property type="evidence" value="ECO:0007669"/>
    <property type="project" value="Ensembl"/>
</dbReference>
<dbReference type="GO" id="GO:0031297">
    <property type="term" value="P:replication fork processing"/>
    <property type="evidence" value="ECO:0000266"/>
    <property type="project" value="ComplexPortal"/>
</dbReference>
<dbReference type="GO" id="GO:0072429">
    <property type="term" value="P:response to intra-S DNA damage checkpoint signaling"/>
    <property type="evidence" value="ECO:0000266"/>
    <property type="project" value="MGI"/>
</dbReference>
<dbReference type="CDD" id="cd21036">
    <property type="entry name" value="WH_MUS81"/>
    <property type="match status" value="1"/>
</dbReference>
<dbReference type="CDD" id="cd20074">
    <property type="entry name" value="XPF_nuclease_Mus81"/>
    <property type="match status" value="1"/>
</dbReference>
<dbReference type="FunFam" id="1.10.10.10:FF:000371">
    <property type="entry name" value="Crossover junction endonuclease MUS81"/>
    <property type="match status" value="1"/>
</dbReference>
<dbReference type="FunFam" id="1.10.150.670:FF:000001">
    <property type="entry name" value="Crossover junction endonuclease MUS81"/>
    <property type="match status" value="1"/>
</dbReference>
<dbReference type="FunFam" id="3.40.50.10130:FF:000003">
    <property type="entry name" value="Crossover junction endonuclease MUS81"/>
    <property type="match status" value="1"/>
</dbReference>
<dbReference type="FunFam" id="1.10.150.110:FF:000001">
    <property type="entry name" value="Putative Crossover junction endonuclease MUS81"/>
    <property type="match status" value="1"/>
</dbReference>
<dbReference type="Gene3D" id="3.40.50.10130">
    <property type="match status" value="1"/>
</dbReference>
<dbReference type="Gene3D" id="1.10.150.670">
    <property type="entry name" value="Crossover junction endonuclease EME1, DNA-binding domain"/>
    <property type="match status" value="1"/>
</dbReference>
<dbReference type="Gene3D" id="1.10.150.110">
    <property type="entry name" value="DNA polymerase beta, N-terminal domain-like"/>
    <property type="match status" value="1"/>
</dbReference>
<dbReference type="Gene3D" id="1.10.10.10">
    <property type="entry name" value="Winged helix-like DNA-binding domain superfamily/Winged helix DNA-binding domain"/>
    <property type="match status" value="1"/>
</dbReference>
<dbReference type="InterPro" id="IPR027421">
    <property type="entry name" value="DNA_pol_lamdba_lyase_dom_sf"/>
</dbReference>
<dbReference type="InterPro" id="IPR042530">
    <property type="entry name" value="EME1/EME2_C"/>
</dbReference>
<dbReference type="InterPro" id="IPR006166">
    <property type="entry name" value="ERCC4_domain"/>
</dbReference>
<dbReference type="InterPro" id="IPR033309">
    <property type="entry name" value="Mus81"/>
</dbReference>
<dbReference type="InterPro" id="IPR011335">
    <property type="entry name" value="Restrct_endonuc-II-like"/>
</dbReference>
<dbReference type="InterPro" id="IPR036388">
    <property type="entry name" value="WH-like_DNA-bd_sf"/>
</dbReference>
<dbReference type="InterPro" id="IPR047417">
    <property type="entry name" value="WH_MUS81"/>
</dbReference>
<dbReference type="InterPro" id="IPR047416">
    <property type="entry name" value="XPF_nuclease_Mus81"/>
</dbReference>
<dbReference type="PANTHER" id="PTHR13451">
    <property type="entry name" value="CLASS II CROSSOVER JUNCTION ENDONUCLEASE MUS81"/>
    <property type="match status" value="1"/>
</dbReference>
<dbReference type="PANTHER" id="PTHR13451:SF0">
    <property type="entry name" value="CROSSOVER JUNCTION ENDONUCLEASE MUS81"/>
    <property type="match status" value="1"/>
</dbReference>
<dbReference type="Pfam" id="PF21292">
    <property type="entry name" value="EME1-MUS81_C"/>
    <property type="match status" value="1"/>
</dbReference>
<dbReference type="Pfam" id="PF02732">
    <property type="entry name" value="ERCC4"/>
    <property type="match status" value="1"/>
</dbReference>
<dbReference type="Pfam" id="PF21136">
    <property type="entry name" value="MUS81-like_WH"/>
    <property type="match status" value="1"/>
</dbReference>
<dbReference type="SMART" id="SM00891">
    <property type="entry name" value="ERCC4"/>
    <property type="match status" value="1"/>
</dbReference>
<dbReference type="SUPFAM" id="SSF47802">
    <property type="entry name" value="DNA polymerase beta, N-terminal domain-like"/>
    <property type="match status" value="1"/>
</dbReference>
<dbReference type="SUPFAM" id="SSF52980">
    <property type="entry name" value="Restriction endonuclease-like"/>
    <property type="match status" value="1"/>
</dbReference>
<proteinExistence type="evidence at protein level"/>
<keyword id="KW-0002">3D-structure</keyword>
<keyword id="KW-0227">DNA damage</keyword>
<keyword id="KW-0233">DNA recombination</keyword>
<keyword id="KW-0234">DNA repair</keyword>
<keyword id="KW-0255">Endonuclease</keyword>
<keyword id="KW-0378">Hydrolase</keyword>
<keyword id="KW-0460">Magnesium</keyword>
<keyword id="KW-0479">Metal-binding</keyword>
<keyword id="KW-0540">Nuclease</keyword>
<keyword id="KW-0539">Nucleus</keyword>
<keyword id="KW-0597">Phosphoprotein</keyword>
<keyword id="KW-1185">Reference proteome</keyword>
<organism>
    <name type="scientific">Mus musculus</name>
    <name type="common">Mouse</name>
    <dbReference type="NCBI Taxonomy" id="10090"/>
    <lineage>
        <taxon>Eukaryota</taxon>
        <taxon>Metazoa</taxon>
        <taxon>Chordata</taxon>
        <taxon>Craniata</taxon>
        <taxon>Vertebrata</taxon>
        <taxon>Euteleostomi</taxon>
        <taxon>Mammalia</taxon>
        <taxon>Eutheria</taxon>
        <taxon>Euarchontoglires</taxon>
        <taxon>Glires</taxon>
        <taxon>Rodentia</taxon>
        <taxon>Myomorpha</taxon>
        <taxon>Muroidea</taxon>
        <taxon>Muridae</taxon>
        <taxon>Murinae</taxon>
        <taxon>Mus</taxon>
        <taxon>Mus</taxon>
    </lineage>
</organism>
<comment type="function">
    <text evidence="1 4 5 6">Catalytic subunit of two functionally distinct, structure-specific, heterodimeric DNA endonucleases MUS81-EME1 and MUS81-EME2 that are involved in the maintenance of genome stability (PubMed:14609959, PubMed:15205536, PubMed:16107704). Both endonucleases have essentially the same substrate specificity though MUS81-EME2 is more active than its MUS81-EME1 counterpart. Both cleave 3'-flaps and nicked Holliday junctions, and exhibit limited endonuclease activity with 5' flaps and nicked double-stranded DNAs. MUS81-EME2 which is active during the replication of DNA is more specifically involved in replication fork processing (PubMed:14609959). Replication forks frequently encounter obstacles to their passage, including DNA base lesions, DNA interstrand cross-links, difficult-to-replicate sequences, transcription bubbles, or tightly bound proteins. One mechanism for the restart of a stalled replication fork involves nucleolytic cleavage mediated by the MUS81-EME2 endonuclease. By acting upon the stalled fork, MUS81-EME2 generates a DNA double-strand break (DSB) that can be repaired by homologous recombination, leading to the restoration of an active fork. MUS81-EME2 could also function in telomere maintenance. MUS81-EME1, on the other hand, is active later in the cell cycle and functions in the resolution of mitotic recombination intermediates including the Holliday junctions, the four-way DNA intermediates that form during homologous recombination (By similarity).</text>
</comment>
<comment type="cofactor">
    <cofactor evidence="1">
        <name>Mg(2+)</name>
        <dbReference type="ChEBI" id="CHEBI:18420"/>
    </cofactor>
</comment>
<comment type="subunit">
    <text evidence="1 4">Part of the heterodimeric DNA structure-specific endonuclease complex MUS81-EME1 (PubMed:14609959). Part of the heterodimeric DNA structure-specific endonuclease complex MUS81-EME2. Interacts with BLM; may stimulate the endonuclease activity of MUS81. Interacts with SLX4/BTBD12; this interaction is direct and links the MUS81-EME1 complex to SLX4, which may coordinate the action of the structure-specific endonuclease during DNA repair. Interacts with DCLRE1B/Apollo. Interacts with RECQL5; this interaction stimulates mitotic DNA synthesis. Interacts with CHEK2 (By similarity).</text>
</comment>
<comment type="subcellular location">
    <subcellularLocation>
        <location evidence="1">Nucleus</location>
        <location evidence="1">Nucleolus</location>
    </subcellularLocation>
    <text evidence="1">Recruited to foci of DNA damage in S-phase cells.</text>
</comment>
<comment type="tissue specificity">
    <text evidence="7">Expressed highly in testis. Expressed also in bone marrow, brain, thymus and to a lesser extent in heart and skeletal muscle, colon, kidney and spleen.</text>
</comment>
<comment type="similarity">
    <text evidence="8">Belongs to the XPF family.</text>
</comment>
<protein>
    <recommendedName>
        <fullName evidence="9">Structure-specific endonuclease subunit MUS81</fullName>
        <ecNumber evidence="1">3.1.22.-</ecNumber>
    </recommendedName>
    <alternativeName>
        <fullName>Crossover junction endonuclease MUS81</fullName>
    </alternativeName>
</protein>
<evidence type="ECO:0000250" key="1">
    <source>
        <dbReference type="UniProtKB" id="Q96NY9"/>
    </source>
</evidence>
<evidence type="ECO:0000255" key="2"/>
<evidence type="ECO:0000256" key="3">
    <source>
        <dbReference type="SAM" id="MobiDB-lite"/>
    </source>
</evidence>
<evidence type="ECO:0000269" key="4">
    <source>
    </source>
</evidence>
<evidence type="ECO:0000269" key="5">
    <source>
    </source>
</evidence>
<evidence type="ECO:0000269" key="6">
    <source>
    </source>
</evidence>
<evidence type="ECO:0000269" key="7">
    <source>
    </source>
</evidence>
<evidence type="ECO:0000305" key="8"/>
<evidence type="ECO:0000305" key="9">
    <source>
    </source>
</evidence>
<evidence type="ECO:0000312" key="10">
    <source>
        <dbReference type="MGI" id="MGI:1918961"/>
    </source>
</evidence>
<evidence type="ECO:0007829" key="11">
    <source>
        <dbReference type="PDB" id="2KP7"/>
    </source>
</evidence>